<evidence type="ECO:0000255" key="1">
    <source>
        <dbReference type="HAMAP-Rule" id="MF_01417"/>
    </source>
</evidence>
<keyword id="KW-0210">Decarboxylase</keyword>
<keyword id="KW-0456">Lyase</keyword>
<keyword id="KW-0460">Magnesium</keyword>
<keyword id="KW-0479">Metal-binding</keyword>
<keyword id="KW-0620">Polyamine biosynthesis</keyword>
<keyword id="KW-0661">Putrescine biosynthesis</keyword>
<keyword id="KW-0663">Pyridoxal phosphate</keyword>
<keyword id="KW-0745">Spermidine biosynthesis</keyword>
<accession>B5FUJ7</accession>
<reference key="1">
    <citation type="journal article" date="2011" name="J. Bacteriol.">
        <title>Comparative genomics of 28 Salmonella enterica isolates: evidence for CRISPR-mediated adaptive sublineage evolution.</title>
        <authorList>
            <person name="Fricke W.F."/>
            <person name="Mammel M.K."/>
            <person name="McDermott P.F."/>
            <person name="Tartera C."/>
            <person name="White D.G."/>
            <person name="Leclerc J.E."/>
            <person name="Ravel J."/>
            <person name="Cebula T.A."/>
        </authorList>
    </citation>
    <scope>NUCLEOTIDE SEQUENCE [LARGE SCALE GENOMIC DNA]</scope>
    <source>
        <strain>CT_02021853</strain>
    </source>
</reference>
<name>SPEA_SALDC</name>
<organism>
    <name type="scientific">Salmonella dublin (strain CT_02021853)</name>
    <dbReference type="NCBI Taxonomy" id="439851"/>
    <lineage>
        <taxon>Bacteria</taxon>
        <taxon>Pseudomonadati</taxon>
        <taxon>Pseudomonadota</taxon>
        <taxon>Gammaproteobacteria</taxon>
        <taxon>Enterobacterales</taxon>
        <taxon>Enterobacteriaceae</taxon>
        <taxon>Salmonella</taxon>
    </lineage>
</organism>
<dbReference type="EC" id="4.1.1.19" evidence="1"/>
<dbReference type="EMBL" id="CP001144">
    <property type="protein sequence ID" value="ACH76229.1"/>
    <property type="molecule type" value="Genomic_DNA"/>
</dbReference>
<dbReference type="SMR" id="B5FUJ7"/>
<dbReference type="KEGG" id="sed:SeD_A3430"/>
<dbReference type="HOGENOM" id="CLU_027243_1_0_6"/>
<dbReference type="UniPathway" id="UPA00186">
    <property type="reaction ID" value="UER00284"/>
</dbReference>
<dbReference type="Proteomes" id="UP000008322">
    <property type="component" value="Chromosome"/>
</dbReference>
<dbReference type="GO" id="GO:0008792">
    <property type="term" value="F:arginine decarboxylase activity"/>
    <property type="evidence" value="ECO:0007669"/>
    <property type="project" value="UniProtKB-UniRule"/>
</dbReference>
<dbReference type="GO" id="GO:0046872">
    <property type="term" value="F:metal ion binding"/>
    <property type="evidence" value="ECO:0007669"/>
    <property type="project" value="UniProtKB-KW"/>
</dbReference>
<dbReference type="GO" id="GO:0006527">
    <property type="term" value="P:arginine catabolic process"/>
    <property type="evidence" value="ECO:0007669"/>
    <property type="project" value="InterPro"/>
</dbReference>
<dbReference type="GO" id="GO:0033388">
    <property type="term" value="P:putrescine biosynthetic process from arginine"/>
    <property type="evidence" value="ECO:0007669"/>
    <property type="project" value="TreeGrafter"/>
</dbReference>
<dbReference type="GO" id="GO:0008295">
    <property type="term" value="P:spermidine biosynthetic process"/>
    <property type="evidence" value="ECO:0007669"/>
    <property type="project" value="UniProtKB-UniRule"/>
</dbReference>
<dbReference type="CDD" id="cd06830">
    <property type="entry name" value="PLPDE_III_ADC"/>
    <property type="match status" value="1"/>
</dbReference>
<dbReference type="FunFam" id="1.10.287.3440:FF:000001">
    <property type="entry name" value="Biosynthetic arginine decarboxylase"/>
    <property type="match status" value="1"/>
</dbReference>
<dbReference type="FunFam" id="1.20.58.930:FF:000001">
    <property type="entry name" value="Biosynthetic arginine decarboxylase"/>
    <property type="match status" value="1"/>
</dbReference>
<dbReference type="FunFam" id="2.40.37.10:FF:000001">
    <property type="entry name" value="Biosynthetic arginine decarboxylase"/>
    <property type="match status" value="1"/>
</dbReference>
<dbReference type="FunFam" id="3.20.20.10:FF:000001">
    <property type="entry name" value="Biosynthetic arginine decarboxylase"/>
    <property type="match status" value="1"/>
</dbReference>
<dbReference type="Gene3D" id="1.10.287.3440">
    <property type="match status" value="1"/>
</dbReference>
<dbReference type="Gene3D" id="1.20.58.930">
    <property type="match status" value="1"/>
</dbReference>
<dbReference type="Gene3D" id="3.20.20.10">
    <property type="entry name" value="Alanine racemase"/>
    <property type="match status" value="1"/>
</dbReference>
<dbReference type="Gene3D" id="2.40.37.10">
    <property type="entry name" value="Lyase, Ornithine Decarboxylase, Chain A, domain 1"/>
    <property type="match status" value="1"/>
</dbReference>
<dbReference type="HAMAP" id="MF_01417">
    <property type="entry name" value="SpeA"/>
    <property type="match status" value="1"/>
</dbReference>
<dbReference type="InterPro" id="IPR009006">
    <property type="entry name" value="Ala_racemase/Decarboxylase_C"/>
</dbReference>
<dbReference type="InterPro" id="IPR040634">
    <property type="entry name" value="Arg_decarb_HB"/>
</dbReference>
<dbReference type="InterPro" id="IPR041128">
    <property type="entry name" value="Arg_decarbox_C"/>
</dbReference>
<dbReference type="InterPro" id="IPR002985">
    <property type="entry name" value="Arg_decrbxlase"/>
</dbReference>
<dbReference type="InterPro" id="IPR022657">
    <property type="entry name" value="De-COase2_CS"/>
</dbReference>
<dbReference type="InterPro" id="IPR022644">
    <property type="entry name" value="De-COase2_N"/>
</dbReference>
<dbReference type="InterPro" id="IPR022653">
    <property type="entry name" value="De-COase2_pyr-phos_BS"/>
</dbReference>
<dbReference type="InterPro" id="IPR000183">
    <property type="entry name" value="Orn/DAP/Arg_de-COase"/>
</dbReference>
<dbReference type="InterPro" id="IPR029066">
    <property type="entry name" value="PLP-binding_barrel"/>
</dbReference>
<dbReference type="NCBIfam" id="NF003763">
    <property type="entry name" value="PRK05354.1"/>
    <property type="match status" value="1"/>
</dbReference>
<dbReference type="NCBIfam" id="TIGR01273">
    <property type="entry name" value="speA"/>
    <property type="match status" value="1"/>
</dbReference>
<dbReference type="PANTHER" id="PTHR43295">
    <property type="entry name" value="ARGININE DECARBOXYLASE"/>
    <property type="match status" value="1"/>
</dbReference>
<dbReference type="PANTHER" id="PTHR43295:SF9">
    <property type="entry name" value="BIOSYNTHETIC ARGININE DECARBOXYLASE"/>
    <property type="match status" value="1"/>
</dbReference>
<dbReference type="Pfam" id="PF17810">
    <property type="entry name" value="Arg_decarb_HB"/>
    <property type="match status" value="1"/>
</dbReference>
<dbReference type="Pfam" id="PF17944">
    <property type="entry name" value="Arg_decarbox_C"/>
    <property type="match status" value="1"/>
</dbReference>
<dbReference type="Pfam" id="PF02784">
    <property type="entry name" value="Orn_Arg_deC_N"/>
    <property type="match status" value="1"/>
</dbReference>
<dbReference type="PIRSF" id="PIRSF001336">
    <property type="entry name" value="Arg_decrbxlase"/>
    <property type="match status" value="1"/>
</dbReference>
<dbReference type="PRINTS" id="PR01180">
    <property type="entry name" value="ARGDCRBXLASE"/>
</dbReference>
<dbReference type="PRINTS" id="PR01179">
    <property type="entry name" value="ODADCRBXLASE"/>
</dbReference>
<dbReference type="SUPFAM" id="SSF50621">
    <property type="entry name" value="Alanine racemase C-terminal domain-like"/>
    <property type="match status" value="1"/>
</dbReference>
<dbReference type="SUPFAM" id="SSF51419">
    <property type="entry name" value="PLP-binding barrel"/>
    <property type="match status" value="1"/>
</dbReference>
<dbReference type="PROSITE" id="PS00878">
    <property type="entry name" value="ODR_DC_2_1"/>
    <property type="match status" value="1"/>
</dbReference>
<dbReference type="PROSITE" id="PS00879">
    <property type="entry name" value="ODR_DC_2_2"/>
    <property type="match status" value="1"/>
</dbReference>
<proteinExistence type="inferred from homology"/>
<feature type="chain" id="PRO_1000145599" description="Biosynthetic arginine decarboxylase">
    <location>
        <begin position="1"/>
        <end position="632"/>
    </location>
</feature>
<feature type="binding site" evidence="1">
    <location>
        <begin position="281"/>
        <end position="291"/>
    </location>
    <ligand>
        <name>substrate</name>
    </ligand>
</feature>
<feature type="modified residue" description="N6-(pyridoxal phosphate)lysine" evidence="1">
    <location>
        <position position="101"/>
    </location>
</feature>
<protein>
    <recommendedName>
        <fullName evidence="1">Biosynthetic arginine decarboxylase</fullName>
        <shortName evidence="1">ADC</shortName>
        <ecNumber evidence="1">4.1.1.19</ecNumber>
    </recommendedName>
</protein>
<sequence length="632" mass="71193">MSSQEASKMLRTYNIAWWGNNYYDVNELGHISVCPDPDVPEARVDLAKLVKAREAQGQRLPALFCFPQILQHRLRSINAAFKRARESYGYNGDYFLVYPIKVNQHRRVIESLIHSGEPLGLEAGSKAELMAVLAHAGMTRSVIVCNGYKDREYIRLALIGEKMGHKVYLVIEKMSEIAIVLEEAERLNVVPRLGVRARLASQGSGKWQSSGGEKSKFGLAATQVLQLVETLRDAGRLDSLQLLHFHLGSQMANIRDIATGVRESARFYVELHKLGVNIQCFDVGGGLGVDYEGTRSQSDCSVNYGLNEYANNIIWAIGDACEEHGLPHPMVITESGRAVTAHHTVLVSNIIGVERNEYTDPTAPAEDAPRALQNLWETWQEMHKPGTRRSLREWLHDSQMDLHDIHIGYSSGAFSLQERAWAEQLYLSMCHEVQKQLDPQNRAHRPIIDELQERMADKMYVNFSLFQSMPDAWGIDQLFPVLPLEGLDQVPERRAVLLDITCDSDGAIDHYIDGDGIATTMPMPEYDPENPPMLGFFMVGAYQEILGNMHNLFGDTEAVDVFVFPDGSVEVELSDEGDTVADMLQYVQLDPKTLLTHFRDQVKQTDLDDALQQQFLEEFEAGLYGYTYLEDE</sequence>
<comment type="function">
    <text evidence="1">Catalyzes the biosynthesis of agmatine from arginine.</text>
</comment>
<comment type="catalytic activity">
    <reaction evidence="1">
        <text>L-arginine + H(+) = agmatine + CO2</text>
        <dbReference type="Rhea" id="RHEA:17641"/>
        <dbReference type="ChEBI" id="CHEBI:15378"/>
        <dbReference type="ChEBI" id="CHEBI:16526"/>
        <dbReference type="ChEBI" id="CHEBI:32682"/>
        <dbReference type="ChEBI" id="CHEBI:58145"/>
        <dbReference type="EC" id="4.1.1.19"/>
    </reaction>
</comment>
<comment type="cofactor">
    <cofactor evidence="1">
        <name>Mg(2+)</name>
        <dbReference type="ChEBI" id="CHEBI:18420"/>
    </cofactor>
</comment>
<comment type="cofactor">
    <cofactor evidence="1">
        <name>pyridoxal 5'-phosphate</name>
        <dbReference type="ChEBI" id="CHEBI:597326"/>
    </cofactor>
</comment>
<comment type="pathway">
    <text evidence="1">Amine and polyamine biosynthesis; agmatine biosynthesis; agmatine from L-arginine: step 1/1.</text>
</comment>
<comment type="similarity">
    <text evidence="1">Belongs to the Orn/Lys/Arg decarboxylase class-II family. SpeA subfamily.</text>
</comment>
<gene>
    <name evidence="1" type="primary">speA</name>
    <name type="ordered locus">SeD_A3430</name>
</gene>